<sequence length="151" mass="17280">MATLEQNLQEMLQDAVKDLGCELWGIECQRVGRFMTVRLFIDKEGGVTVDDCADVSRQVSAILDVEDPIADKYNLEVSSPGLDRPLFTLPQFERYIGQDIAVHLRIPVMERRKWQGKLERIEKDMITLIVDDQEQILVFGNIQKANVVAKF</sequence>
<name>RIMP_HAEI8</name>
<reference key="1">
    <citation type="journal article" date="2005" name="J. Bacteriol.">
        <title>Genomic sequence of an otitis media isolate of nontypeable Haemophilus influenzae: comparative study with H. influenzae serotype d, strain KW20.</title>
        <authorList>
            <person name="Harrison A."/>
            <person name="Dyer D.W."/>
            <person name="Gillaspy A."/>
            <person name="Ray W.C."/>
            <person name="Mungur R."/>
            <person name="Carson M.B."/>
            <person name="Zhong H."/>
            <person name="Gipson J."/>
            <person name="Gipson M."/>
            <person name="Johnson L.S."/>
            <person name="Lewis L."/>
            <person name="Bakaletz L.O."/>
            <person name="Munson R.S. Jr."/>
        </authorList>
    </citation>
    <scope>NUCLEOTIDE SEQUENCE [LARGE SCALE GENOMIC DNA]</scope>
    <source>
        <strain>86-028NP</strain>
    </source>
</reference>
<dbReference type="EMBL" id="CP000057">
    <property type="protein sequence ID" value="AAX88612.1"/>
    <property type="molecule type" value="Genomic_DNA"/>
</dbReference>
<dbReference type="RefSeq" id="WP_005650281.1">
    <property type="nucleotide sequence ID" value="NC_007146.2"/>
</dbReference>
<dbReference type="SMR" id="Q4QK35"/>
<dbReference type="KEGG" id="hit:NTHI1846"/>
<dbReference type="HOGENOM" id="CLU_070525_1_1_6"/>
<dbReference type="Proteomes" id="UP000002525">
    <property type="component" value="Chromosome"/>
</dbReference>
<dbReference type="GO" id="GO:0005829">
    <property type="term" value="C:cytosol"/>
    <property type="evidence" value="ECO:0007669"/>
    <property type="project" value="TreeGrafter"/>
</dbReference>
<dbReference type="GO" id="GO:0000028">
    <property type="term" value="P:ribosomal small subunit assembly"/>
    <property type="evidence" value="ECO:0007669"/>
    <property type="project" value="TreeGrafter"/>
</dbReference>
<dbReference type="GO" id="GO:0006412">
    <property type="term" value="P:translation"/>
    <property type="evidence" value="ECO:0007669"/>
    <property type="project" value="TreeGrafter"/>
</dbReference>
<dbReference type="CDD" id="cd01734">
    <property type="entry name" value="YlxS_C"/>
    <property type="match status" value="1"/>
</dbReference>
<dbReference type="FunFam" id="3.30.300.70:FF:000001">
    <property type="entry name" value="Ribosome maturation factor RimP"/>
    <property type="match status" value="1"/>
</dbReference>
<dbReference type="Gene3D" id="2.30.30.180">
    <property type="entry name" value="Ribosome maturation factor RimP, C-terminal domain"/>
    <property type="match status" value="1"/>
</dbReference>
<dbReference type="Gene3D" id="3.30.300.70">
    <property type="entry name" value="RimP-like superfamily, N-terminal"/>
    <property type="match status" value="1"/>
</dbReference>
<dbReference type="HAMAP" id="MF_01077">
    <property type="entry name" value="RimP"/>
    <property type="match status" value="1"/>
</dbReference>
<dbReference type="InterPro" id="IPR003728">
    <property type="entry name" value="Ribosome_maturation_RimP"/>
</dbReference>
<dbReference type="InterPro" id="IPR028998">
    <property type="entry name" value="RimP_C"/>
</dbReference>
<dbReference type="InterPro" id="IPR036847">
    <property type="entry name" value="RimP_C_sf"/>
</dbReference>
<dbReference type="InterPro" id="IPR028989">
    <property type="entry name" value="RimP_N"/>
</dbReference>
<dbReference type="InterPro" id="IPR035956">
    <property type="entry name" value="RimP_N_sf"/>
</dbReference>
<dbReference type="NCBIfam" id="NF000927">
    <property type="entry name" value="PRK00092.1-1"/>
    <property type="match status" value="1"/>
</dbReference>
<dbReference type="PANTHER" id="PTHR33867">
    <property type="entry name" value="RIBOSOME MATURATION FACTOR RIMP"/>
    <property type="match status" value="1"/>
</dbReference>
<dbReference type="PANTHER" id="PTHR33867:SF1">
    <property type="entry name" value="RIBOSOME MATURATION FACTOR RIMP"/>
    <property type="match status" value="1"/>
</dbReference>
<dbReference type="Pfam" id="PF17384">
    <property type="entry name" value="DUF150_C"/>
    <property type="match status" value="1"/>
</dbReference>
<dbReference type="Pfam" id="PF02576">
    <property type="entry name" value="RimP_N"/>
    <property type="match status" value="1"/>
</dbReference>
<dbReference type="SUPFAM" id="SSF74942">
    <property type="entry name" value="YhbC-like, C-terminal domain"/>
    <property type="match status" value="1"/>
</dbReference>
<dbReference type="SUPFAM" id="SSF75420">
    <property type="entry name" value="YhbC-like, N-terminal domain"/>
    <property type="match status" value="1"/>
</dbReference>
<gene>
    <name evidence="1" type="primary">rimP</name>
    <name type="ordered locus">NTHI1846</name>
</gene>
<accession>Q4QK35</accession>
<proteinExistence type="inferred from homology"/>
<organism>
    <name type="scientific">Haemophilus influenzae (strain 86-028NP)</name>
    <dbReference type="NCBI Taxonomy" id="281310"/>
    <lineage>
        <taxon>Bacteria</taxon>
        <taxon>Pseudomonadati</taxon>
        <taxon>Pseudomonadota</taxon>
        <taxon>Gammaproteobacteria</taxon>
        <taxon>Pasteurellales</taxon>
        <taxon>Pasteurellaceae</taxon>
        <taxon>Haemophilus</taxon>
    </lineage>
</organism>
<comment type="function">
    <text evidence="1">Required for maturation of 30S ribosomal subunits.</text>
</comment>
<comment type="subcellular location">
    <subcellularLocation>
        <location evidence="1">Cytoplasm</location>
    </subcellularLocation>
</comment>
<comment type="similarity">
    <text evidence="1">Belongs to the RimP family.</text>
</comment>
<protein>
    <recommendedName>
        <fullName evidence="1">Ribosome maturation factor RimP</fullName>
    </recommendedName>
</protein>
<evidence type="ECO:0000255" key="1">
    <source>
        <dbReference type="HAMAP-Rule" id="MF_01077"/>
    </source>
</evidence>
<feature type="chain" id="PRO_0000229243" description="Ribosome maturation factor RimP">
    <location>
        <begin position="1"/>
        <end position="151"/>
    </location>
</feature>
<keyword id="KW-0963">Cytoplasm</keyword>
<keyword id="KW-0690">Ribosome biogenesis</keyword>